<accession>Q67Q46</accession>
<dbReference type="EC" id="2.5.1.7" evidence="1"/>
<dbReference type="EMBL" id="AP006840">
    <property type="protein sequence ID" value="BAD40197.1"/>
    <property type="molecule type" value="Genomic_DNA"/>
</dbReference>
<dbReference type="RefSeq" id="WP_011195343.1">
    <property type="nucleotide sequence ID" value="NC_006177.1"/>
</dbReference>
<dbReference type="SMR" id="Q67Q46"/>
<dbReference type="STRING" id="292459.STH1212"/>
<dbReference type="KEGG" id="sth:STH1212"/>
<dbReference type="eggNOG" id="COG0766">
    <property type="taxonomic scope" value="Bacteria"/>
</dbReference>
<dbReference type="HOGENOM" id="CLU_027387_0_0_9"/>
<dbReference type="OrthoDB" id="9803760at2"/>
<dbReference type="UniPathway" id="UPA00219"/>
<dbReference type="Proteomes" id="UP000000417">
    <property type="component" value="Chromosome"/>
</dbReference>
<dbReference type="GO" id="GO:0005737">
    <property type="term" value="C:cytoplasm"/>
    <property type="evidence" value="ECO:0007669"/>
    <property type="project" value="UniProtKB-SubCell"/>
</dbReference>
<dbReference type="GO" id="GO:0008760">
    <property type="term" value="F:UDP-N-acetylglucosamine 1-carboxyvinyltransferase activity"/>
    <property type="evidence" value="ECO:0007669"/>
    <property type="project" value="UniProtKB-UniRule"/>
</dbReference>
<dbReference type="GO" id="GO:0051301">
    <property type="term" value="P:cell division"/>
    <property type="evidence" value="ECO:0007669"/>
    <property type="project" value="UniProtKB-KW"/>
</dbReference>
<dbReference type="GO" id="GO:0071555">
    <property type="term" value="P:cell wall organization"/>
    <property type="evidence" value="ECO:0007669"/>
    <property type="project" value="UniProtKB-KW"/>
</dbReference>
<dbReference type="GO" id="GO:0009252">
    <property type="term" value="P:peptidoglycan biosynthetic process"/>
    <property type="evidence" value="ECO:0007669"/>
    <property type="project" value="UniProtKB-UniRule"/>
</dbReference>
<dbReference type="GO" id="GO:0008360">
    <property type="term" value="P:regulation of cell shape"/>
    <property type="evidence" value="ECO:0007669"/>
    <property type="project" value="UniProtKB-KW"/>
</dbReference>
<dbReference type="GO" id="GO:0019277">
    <property type="term" value="P:UDP-N-acetylgalactosamine biosynthetic process"/>
    <property type="evidence" value="ECO:0007669"/>
    <property type="project" value="InterPro"/>
</dbReference>
<dbReference type="CDD" id="cd01555">
    <property type="entry name" value="UdpNAET"/>
    <property type="match status" value="1"/>
</dbReference>
<dbReference type="FunFam" id="3.65.10.10:FF:000001">
    <property type="entry name" value="UDP-N-acetylglucosamine 1-carboxyvinyltransferase"/>
    <property type="match status" value="1"/>
</dbReference>
<dbReference type="Gene3D" id="3.65.10.10">
    <property type="entry name" value="Enolpyruvate transferase domain"/>
    <property type="match status" value="2"/>
</dbReference>
<dbReference type="HAMAP" id="MF_00111">
    <property type="entry name" value="MurA"/>
    <property type="match status" value="1"/>
</dbReference>
<dbReference type="InterPro" id="IPR001986">
    <property type="entry name" value="Enolpyruvate_Tfrase_dom"/>
</dbReference>
<dbReference type="InterPro" id="IPR036968">
    <property type="entry name" value="Enolpyruvate_Tfrase_sf"/>
</dbReference>
<dbReference type="InterPro" id="IPR050068">
    <property type="entry name" value="MurA_subfamily"/>
</dbReference>
<dbReference type="InterPro" id="IPR013792">
    <property type="entry name" value="RNA3'P_cycl/enolpyr_Trfase_a/b"/>
</dbReference>
<dbReference type="InterPro" id="IPR005750">
    <property type="entry name" value="UDP_GlcNAc_COvinyl_MurA"/>
</dbReference>
<dbReference type="NCBIfam" id="TIGR01072">
    <property type="entry name" value="murA"/>
    <property type="match status" value="1"/>
</dbReference>
<dbReference type="NCBIfam" id="NF006873">
    <property type="entry name" value="PRK09369.1"/>
    <property type="match status" value="1"/>
</dbReference>
<dbReference type="PANTHER" id="PTHR43783">
    <property type="entry name" value="UDP-N-ACETYLGLUCOSAMINE 1-CARBOXYVINYLTRANSFERASE"/>
    <property type="match status" value="1"/>
</dbReference>
<dbReference type="PANTHER" id="PTHR43783:SF1">
    <property type="entry name" value="UDP-N-ACETYLGLUCOSAMINE 1-CARBOXYVINYLTRANSFERASE"/>
    <property type="match status" value="1"/>
</dbReference>
<dbReference type="Pfam" id="PF00275">
    <property type="entry name" value="EPSP_synthase"/>
    <property type="match status" value="1"/>
</dbReference>
<dbReference type="SUPFAM" id="SSF55205">
    <property type="entry name" value="EPT/RTPC-like"/>
    <property type="match status" value="1"/>
</dbReference>
<sequence>MDRPAGLRLRPREVACIVKPNERYVVAGGCRLQGEVPVSGAKNAALPILAAALLTSGESVIHNAPMIRDVAVMIEILHKLGARVEEGPEGVSGRTLRIRADGLNGQEVGADFTREMRSSIFLMGPLLARVGKIRISYPGGCAIGPRPIDFHLRGLEALGARIEERFGYIEASVPRRLRGTEIYLDFPSVGATENLMMAAVLAEGTTVIRNAAREPEIVDLQAFLNKMGARVRGAGLDVIRIDGVSKLGSVEHTVIPDRIEAATFLAAAAITGGEVTVQGVIPEHVDAVTAKLREMGTTIREYGTAVTAVGPRRLKAADVKTLPYPGFPTDMQPQMMALAATADGTSIITETIFENRFKVADELRRMGANIKTEGRTAVVQGVPSLSGATVVCPALREGMALILAGLRAEGETTIEDIYHIDRGYQHLEQKLTRLGATISRV</sequence>
<comment type="function">
    <text evidence="1">Cell wall formation. Adds enolpyruvyl to UDP-N-acetylglucosamine.</text>
</comment>
<comment type="catalytic activity">
    <reaction evidence="1">
        <text>phosphoenolpyruvate + UDP-N-acetyl-alpha-D-glucosamine = UDP-N-acetyl-3-O-(1-carboxyvinyl)-alpha-D-glucosamine + phosphate</text>
        <dbReference type="Rhea" id="RHEA:18681"/>
        <dbReference type="ChEBI" id="CHEBI:43474"/>
        <dbReference type="ChEBI" id="CHEBI:57705"/>
        <dbReference type="ChEBI" id="CHEBI:58702"/>
        <dbReference type="ChEBI" id="CHEBI:68483"/>
        <dbReference type="EC" id="2.5.1.7"/>
    </reaction>
</comment>
<comment type="pathway">
    <text evidence="1">Cell wall biogenesis; peptidoglycan biosynthesis.</text>
</comment>
<comment type="subcellular location">
    <subcellularLocation>
        <location evidence="1">Cytoplasm</location>
    </subcellularLocation>
</comment>
<comment type="similarity">
    <text evidence="1">Belongs to the EPSP synthase family. MurA subfamily.</text>
</comment>
<organism>
    <name type="scientific">Symbiobacterium thermophilum (strain DSM 24528 / JCM 14929 / IAM 14863 / T)</name>
    <dbReference type="NCBI Taxonomy" id="292459"/>
    <lineage>
        <taxon>Bacteria</taxon>
        <taxon>Bacillati</taxon>
        <taxon>Bacillota</taxon>
        <taxon>Clostridia</taxon>
        <taxon>Eubacteriales</taxon>
        <taxon>Symbiobacteriaceae</taxon>
        <taxon>Symbiobacterium</taxon>
    </lineage>
</organism>
<proteinExistence type="inferred from homology"/>
<protein>
    <recommendedName>
        <fullName evidence="1">UDP-N-acetylglucosamine 1-carboxyvinyltransferase 1</fullName>
        <ecNumber evidence="1">2.5.1.7</ecNumber>
    </recommendedName>
    <alternativeName>
        <fullName evidence="1">Enoylpyruvate transferase 1</fullName>
    </alternativeName>
    <alternativeName>
        <fullName evidence="1">UDP-N-acetylglucosamine enolpyruvyl transferase 1</fullName>
        <shortName evidence="1">EPT 1</shortName>
    </alternativeName>
</protein>
<feature type="chain" id="PRO_0000231287" description="UDP-N-acetylglucosamine 1-carboxyvinyltransferase 1">
    <location>
        <begin position="1"/>
        <end position="441"/>
    </location>
</feature>
<feature type="active site" description="Proton donor" evidence="1">
    <location>
        <position position="141"/>
    </location>
</feature>
<feature type="binding site" evidence="1">
    <location>
        <begin position="42"/>
        <end position="43"/>
    </location>
    <ligand>
        <name>phosphoenolpyruvate</name>
        <dbReference type="ChEBI" id="CHEBI:58702"/>
    </ligand>
</feature>
<feature type="binding site" evidence="1">
    <location>
        <position position="117"/>
    </location>
    <ligand>
        <name>UDP-N-acetyl-alpha-D-glucosamine</name>
        <dbReference type="ChEBI" id="CHEBI:57705"/>
    </ligand>
</feature>
<feature type="binding site" evidence="1">
    <location>
        <position position="330"/>
    </location>
    <ligand>
        <name>UDP-N-acetyl-alpha-D-glucosamine</name>
        <dbReference type="ChEBI" id="CHEBI:57705"/>
    </ligand>
</feature>
<feature type="binding site" evidence="1">
    <location>
        <position position="352"/>
    </location>
    <ligand>
        <name>UDP-N-acetyl-alpha-D-glucosamine</name>
        <dbReference type="ChEBI" id="CHEBI:57705"/>
    </ligand>
</feature>
<feature type="modified residue" description="2-(S-cysteinyl)pyruvic acid O-phosphothioketal" evidence="1">
    <location>
        <position position="141"/>
    </location>
</feature>
<evidence type="ECO:0000255" key="1">
    <source>
        <dbReference type="HAMAP-Rule" id="MF_00111"/>
    </source>
</evidence>
<keyword id="KW-0131">Cell cycle</keyword>
<keyword id="KW-0132">Cell division</keyword>
<keyword id="KW-0133">Cell shape</keyword>
<keyword id="KW-0961">Cell wall biogenesis/degradation</keyword>
<keyword id="KW-0963">Cytoplasm</keyword>
<keyword id="KW-0573">Peptidoglycan synthesis</keyword>
<keyword id="KW-0670">Pyruvate</keyword>
<keyword id="KW-1185">Reference proteome</keyword>
<keyword id="KW-0808">Transferase</keyword>
<name>MURA1_SYMTH</name>
<gene>
    <name evidence="1" type="primary">murA1</name>
    <name type="ordered locus">STH1212</name>
</gene>
<reference key="1">
    <citation type="journal article" date="2004" name="Nucleic Acids Res.">
        <title>Genome sequence of Symbiobacterium thermophilum, an uncultivable bacterium that depends on microbial commensalism.</title>
        <authorList>
            <person name="Ueda K."/>
            <person name="Yamashita A."/>
            <person name="Ishikawa J."/>
            <person name="Shimada M."/>
            <person name="Watsuji T."/>
            <person name="Morimura K."/>
            <person name="Ikeda H."/>
            <person name="Hattori M."/>
            <person name="Beppu T."/>
        </authorList>
    </citation>
    <scope>NUCLEOTIDE SEQUENCE [LARGE SCALE GENOMIC DNA]</scope>
    <source>
        <strain>DSM 24528 / JCM 14929 / IAM 14863 / T</strain>
    </source>
</reference>